<keyword id="KW-0489">Methyltransferase</keyword>
<keyword id="KW-0539">Nucleus</keyword>
<keyword id="KW-1185">Reference proteome</keyword>
<keyword id="KW-0694">RNA-binding</keyword>
<keyword id="KW-0949">S-adenosyl-L-methionine</keyword>
<keyword id="KW-0808">Transferase</keyword>
<keyword id="KW-0819">tRNA processing</keyword>
<keyword id="KW-0820">tRNA-binding</keyword>
<evidence type="ECO:0000255" key="1">
    <source>
        <dbReference type="HAMAP-Rule" id="MF_03055"/>
    </source>
</evidence>
<organism>
    <name type="scientific">Bombyx mori</name>
    <name type="common">Silk moth</name>
    <dbReference type="NCBI Taxonomy" id="7091"/>
    <lineage>
        <taxon>Eukaryota</taxon>
        <taxon>Metazoa</taxon>
        <taxon>Ecdysozoa</taxon>
        <taxon>Arthropoda</taxon>
        <taxon>Hexapoda</taxon>
        <taxon>Insecta</taxon>
        <taxon>Pterygota</taxon>
        <taxon>Neoptera</taxon>
        <taxon>Endopterygota</taxon>
        <taxon>Lepidoptera</taxon>
        <taxon>Glossata</taxon>
        <taxon>Ditrysia</taxon>
        <taxon>Bombycoidea</taxon>
        <taxon>Bombycidae</taxon>
        <taxon>Bombycinae</taxon>
        <taxon>Bombyx</taxon>
    </lineage>
</organism>
<protein>
    <recommendedName>
        <fullName evidence="1">tRNA (guanine-N(7)-)-methyltransferase</fullName>
        <ecNumber evidence="1">2.1.1.33</ecNumber>
    </recommendedName>
    <alternativeName>
        <fullName evidence="1">tRNA (guanine(46)-N(7))-methyltransferase</fullName>
    </alternativeName>
    <alternativeName>
        <fullName evidence="1">tRNA(m7G46)-methyltransferase</fullName>
    </alternativeName>
</protein>
<comment type="function">
    <text evidence="1">Catalyzes the formation of N(7)-methylguanine at position 46 (m7G46) in tRNA.</text>
</comment>
<comment type="catalytic activity">
    <reaction evidence="1">
        <text>guanosine(46) in tRNA + S-adenosyl-L-methionine = N(7)-methylguanosine(46) in tRNA + S-adenosyl-L-homocysteine</text>
        <dbReference type="Rhea" id="RHEA:42708"/>
        <dbReference type="Rhea" id="RHEA-COMP:10188"/>
        <dbReference type="Rhea" id="RHEA-COMP:10189"/>
        <dbReference type="ChEBI" id="CHEBI:57856"/>
        <dbReference type="ChEBI" id="CHEBI:59789"/>
        <dbReference type="ChEBI" id="CHEBI:74269"/>
        <dbReference type="ChEBI" id="CHEBI:74480"/>
        <dbReference type="EC" id="2.1.1.33"/>
    </reaction>
</comment>
<comment type="pathway">
    <text evidence="1">tRNA modification; N(7)-methylguanine-tRNA biosynthesis.</text>
</comment>
<comment type="subcellular location">
    <subcellularLocation>
        <location evidence="1">Nucleus</location>
    </subcellularLocation>
</comment>
<comment type="similarity">
    <text evidence="1">Belongs to the class I-like SAM-binding methyltransferase superfamily. TrmB family.</text>
</comment>
<accession>Q1HPU2</accession>
<sequence>MALPQKKYYRQRAHSNPIADHCFDYPSHPDDYDWTPLYPIISEKPNQVEFLDVGCGYGGLLVALSPMFPSNLMLGSEIRVKVSDYVNDRIKALRVQYPDQYQNVAVLRTNAMKYLPNFFHKGQLKKMFFLYPDPHFKKAKHKWRIINKWLLSEYAYVLCEQGIVYTITDVKDLNEWMVAHFEEHPLFESVPEEELKEDPIIEKLYESTEEGQKVTRNNGEKFLAVFRRIADKTKTN</sequence>
<dbReference type="EC" id="2.1.1.33" evidence="1"/>
<dbReference type="EMBL" id="DQ443310">
    <property type="protein sequence ID" value="ABF51399.1"/>
    <property type="molecule type" value="mRNA"/>
</dbReference>
<dbReference type="RefSeq" id="NP_001040444.1">
    <property type="nucleotide sequence ID" value="NM_001046979.1"/>
</dbReference>
<dbReference type="SMR" id="Q1HPU2"/>
<dbReference type="FunCoup" id="Q1HPU2">
    <property type="interactions" value="848"/>
</dbReference>
<dbReference type="STRING" id="7091.Q1HPU2"/>
<dbReference type="PaxDb" id="7091-BGIBMGA006783-TA"/>
<dbReference type="EnsemblMetazoa" id="NM_001046979.1">
    <property type="protein sequence ID" value="NP_001040444.1"/>
    <property type="gene ID" value="LOC732983"/>
</dbReference>
<dbReference type="GeneID" id="732983"/>
<dbReference type="KEGG" id="bmor:732983"/>
<dbReference type="eggNOG" id="KOG3115">
    <property type="taxonomic scope" value="Eukaryota"/>
</dbReference>
<dbReference type="HOGENOM" id="CLU_050910_3_2_1"/>
<dbReference type="InParanoid" id="Q1HPU2"/>
<dbReference type="OrthoDB" id="523489at7088"/>
<dbReference type="UniPathway" id="UPA00989"/>
<dbReference type="Proteomes" id="UP000005204">
    <property type="component" value="Unassembled WGS sequence"/>
</dbReference>
<dbReference type="GO" id="GO:0005634">
    <property type="term" value="C:nucleus"/>
    <property type="evidence" value="ECO:0007669"/>
    <property type="project" value="UniProtKB-SubCell"/>
</dbReference>
<dbReference type="GO" id="GO:0043527">
    <property type="term" value="C:tRNA methyltransferase complex"/>
    <property type="evidence" value="ECO:0007669"/>
    <property type="project" value="TreeGrafter"/>
</dbReference>
<dbReference type="GO" id="GO:0008176">
    <property type="term" value="F:tRNA (guanine(46)-N7)-methyltransferase activity"/>
    <property type="evidence" value="ECO:0007669"/>
    <property type="project" value="UniProtKB-UniRule"/>
</dbReference>
<dbReference type="GO" id="GO:0000049">
    <property type="term" value="F:tRNA binding"/>
    <property type="evidence" value="ECO:0007669"/>
    <property type="project" value="UniProtKB-UniRule"/>
</dbReference>
<dbReference type="FunFam" id="3.40.50.150:FF:000060">
    <property type="entry name" value="tRNA (guanine-N(7)-)-methyltransferase"/>
    <property type="match status" value="1"/>
</dbReference>
<dbReference type="Gene3D" id="3.40.50.150">
    <property type="entry name" value="Vaccinia Virus protein VP39"/>
    <property type="match status" value="1"/>
</dbReference>
<dbReference type="HAMAP" id="MF_03055">
    <property type="entry name" value="tRNA_methyltr_TrmB_euk"/>
    <property type="match status" value="1"/>
</dbReference>
<dbReference type="InterPro" id="IPR029063">
    <property type="entry name" value="SAM-dependent_MTases_sf"/>
</dbReference>
<dbReference type="InterPro" id="IPR025763">
    <property type="entry name" value="Trm8_euk"/>
</dbReference>
<dbReference type="InterPro" id="IPR003358">
    <property type="entry name" value="tRNA_(Gua-N-7)_MeTrfase_Trmb"/>
</dbReference>
<dbReference type="NCBIfam" id="TIGR00091">
    <property type="entry name" value="tRNA (guanosine(46)-N7)-methyltransferase TrmB"/>
    <property type="match status" value="1"/>
</dbReference>
<dbReference type="PANTHER" id="PTHR23417">
    <property type="entry name" value="3-DEOXY-D-MANNO-OCTULOSONIC-ACID TRANSFERASE/TRNA GUANINE-N 7 - -METHYLTRANSFERASE"/>
    <property type="match status" value="1"/>
</dbReference>
<dbReference type="PANTHER" id="PTHR23417:SF16">
    <property type="entry name" value="TRNA (GUANINE-N(7)-)-METHYLTRANSFERASE"/>
    <property type="match status" value="1"/>
</dbReference>
<dbReference type="Pfam" id="PF02390">
    <property type="entry name" value="Methyltransf_4"/>
    <property type="match status" value="1"/>
</dbReference>
<dbReference type="SUPFAM" id="SSF53335">
    <property type="entry name" value="S-adenosyl-L-methionine-dependent methyltransferases"/>
    <property type="match status" value="1"/>
</dbReference>
<dbReference type="PROSITE" id="PS51625">
    <property type="entry name" value="SAM_MT_TRMB"/>
    <property type="match status" value="1"/>
</dbReference>
<proteinExistence type="evidence at transcript level"/>
<feature type="chain" id="PRO_0000370566" description="tRNA (guanine-N(7)-)-methyltransferase">
    <location>
        <begin position="1"/>
        <end position="236"/>
    </location>
</feature>
<feature type="active site" evidence="1">
    <location>
        <position position="133"/>
    </location>
</feature>
<feature type="binding site" evidence="1">
    <location>
        <position position="54"/>
    </location>
    <ligand>
        <name>S-adenosyl-L-methionine</name>
        <dbReference type="ChEBI" id="CHEBI:59789"/>
    </ligand>
</feature>
<feature type="binding site" evidence="1">
    <location>
        <begin position="77"/>
        <end position="78"/>
    </location>
    <ligand>
        <name>S-adenosyl-L-methionine</name>
        <dbReference type="ChEBI" id="CHEBI:59789"/>
    </ligand>
</feature>
<feature type="binding site" evidence="1">
    <location>
        <begin position="110"/>
        <end position="111"/>
    </location>
    <ligand>
        <name>S-adenosyl-L-methionine</name>
        <dbReference type="ChEBI" id="CHEBI:59789"/>
    </ligand>
</feature>
<feature type="binding site" evidence="1">
    <location>
        <position position="130"/>
    </location>
    <ligand>
        <name>S-adenosyl-L-methionine</name>
        <dbReference type="ChEBI" id="CHEBI:59789"/>
    </ligand>
</feature>
<feature type="binding site" evidence="1">
    <location>
        <begin position="208"/>
        <end position="210"/>
    </location>
    <ligand>
        <name>S-adenosyl-L-methionine</name>
        <dbReference type="ChEBI" id="CHEBI:59789"/>
    </ligand>
</feature>
<reference key="1">
    <citation type="submission" date="2006-03" db="EMBL/GenBank/DDBJ databases">
        <title>Blast silkworm EST database for functional genes.</title>
        <authorList>
            <person name="Niu B.L."/>
            <person name="Meng Z.Q."/>
            <person name="Weng H.B."/>
            <person name="Shen W.F."/>
            <person name="He L.H."/>
            <person name="Zheng K.F."/>
            <person name="Ye S.T."/>
            <person name="Lin T.B."/>
            <person name="Chen J.E."/>
        </authorList>
    </citation>
    <scope>NUCLEOTIDE SEQUENCE [LARGE SCALE MRNA]</scope>
</reference>
<name>TRMB_BOMMO</name>